<protein>
    <recommendedName>
        <fullName>Major prion protein</fullName>
        <shortName>PrP</shortName>
    </recommendedName>
    <alternativeName>
        <fullName>PrP27-30</fullName>
    </alternativeName>
    <alternativeName>
        <fullName>PrP33-35C</fullName>
    </alternativeName>
    <cdAntigenName>CD230</cdAntigenName>
</protein>
<sequence>MANLGCWMLVLFVATWSDLGLCKKRPKPGGWNTGGSRYPGQGSPGGNRYPPQGGGGWGQPHGGGWGQPHGGGWGQPHGGGWGQPHGGGWGQGGGTHSQWNKPSKPKTSMKHMAGAAAAGAVVGGLGGYMLGSAMSRPLIHFGNDYEDRYYRENMYRYPNQVYYRPVDQYSNQNNFVHDCVNITIKQHTVTTTTKGENFTETDVKMMERVVEQMCITQYEKESQAYYQRGSSMVFFSSPPVILLISFLIFLIVG</sequence>
<reference key="1">
    <citation type="journal article" date="1995" name="J. Mol. Biol.">
        <title>Prion protein gene variation among primates.</title>
        <authorList>
            <person name="Schaetzl H.M."/>
            <person name="Da Costa M."/>
            <person name="Taylor L."/>
            <person name="Cohen F.E."/>
            <person name="Prusiner S.B."/>
        </authorList>
    </citation>
    <scope>NUCLEOTIDE SEQUENCE [GENOMIC DNA]</scope>
</reference>
<gene>
    <name type="primary">PRNP</name>
    <name type="synonym">PRP</name>
</gene>
<keyword id="KW-0034">Amyloid</keyword>
<keyword id="KW-1003">Cell membrane</keyword>
<keyword id="KW-0186">Copper</keyword>
<keyword id="KW-1015">Disulfide bond</keyword>
<keyword id="KW-0325">Glycoprotein</keyword>
<keyword id="KW-0333">Golgi apparatus</keyword>
<keyword id="KW-0336">GPI-anchor</keyword>
<keyword id="KW-0449">Lipoprotein</keyword>
<keyword id="KW-0472">Membrane</keyword>
<keyword id="KW-0479">Metal-binding</keyword>
<keyword id="KW-0640">Prion</keyword>
<keyword id="KW-0677">Repeat</keyword>
<keyword id="KW-0732">Signal</keyword>
<keyword id="KW-0862">Zinc</keyword>
<organism>
    <name type="scientific">Trachypithecus francoisi</name>
    <name type="common">Francois' leaf monkey</name>
    <name type="synonym">Presbytis francoisi</name>
    <dbReference type="NCBI Taxonomy" id="54180"/>
    <lineage>
        <taxon>Eukaryota</taxon>
        <taxon>Metazoa</taxon>
        <taxon>Chordata</taxon>
        <taxon>Craniata</taxon>
        <taxon>Vertebrata</taxon>
        <taxon>Euteleostomi</taxon>
        <taxon>Mammalia</taxon>
        <taxon>Eutheria</taxon>
        <taxon>Euarchontoglires</taxon>
        <taxon>Primates</taxon>
        <taxon>Haplorrhini</taxon>
        <taxon>Catarrhini</taxon>
        <taxon>Cercopithecidae</taxon>
        <taxon>Colobinae</taxon>
        <taxon>Trachypithecus</taxon>
    </lineage>
</organism>
<dbReference type="EMBL" id="U08302">
    <property type="protein sequence ID" value="AAB03105.1"/>
    <property type="molecule type" value="Genomic_DNA"/>
</dbReference>
<dbReference type="PIR" id="S53619">
    <property type="entry name" value="S53619"/>
</dbReference>
<dbReference type="SMR" id="P40257"/>
<dbReference type="GlyCosmos" id="P40257">
    <property type="glycosylation" value="2 sites, No reported glycans"/>
</dbReference>
<dbReference type="GO" id="GO:0005794">
    <property type="term" value="C:Golgi apparatus"/>
    <property type="evidence" value="ECO:0007669"/>
    <property type="project" value="UniProtKB-SubCell"/>
</dbReference>
<dbReference type="GO" id="GO:0005886">
    <property type="term" value="C:plasma membrane"/>
    <property type="evidence" value="ECO:0007669"/>
    <property type="project" value="UniProtKB-SubCell"/>
</dbReference>
<dbReference type="GO" id="GO:0098552">
    <property type="term" value="C:side of membrane"/>
    <property type="evidence" value="ECO:0007669"/>
    <property type="project" value="UniProtKB-KW"/>
</dbReference>
<dbReference type="GO" id="GO:0005507">
    <property type="term" value="F:copper ion binding"/>
    <property type="evidence" value="ECO:0000250"/>
    <property type="project" value="UniProtKB"/>
</dbReference>
<dbReference type="GO" id="GO:0051260">
    <property type="term" value="P:protein homooligomerization"/>
    <property type="evidence" value="ECO:0007669"/>
    <property type="project" value="InterPro"/>
</dbReference>
<dbReference type="FunFam" id="1.10.790.10:FF:000001">
    <property type="entry name" value="Major prion protein"/>
    <property type="match status" value="1"/>
</dbReference>
<dbReference type="Gene3D" id="1.10.790.10">
    <property type="entry name" value="Prion/Doppel protein, beta-ribbon domain"/>
    <property type="match status" value="1"/>
</dbReference>
<dbReference type="InterPro" id="IPR000817">
    <property type="entry name" value="Prion"/>
</dbReference>
<dbReference type="InterPro" id="IPR036924">
    <property type="entry name" value="Prion/Doppel_b-ribbon_dom_sf"/>
</dbReference>
<dbReference type="InterPro" id="IPR022416">
    <property type="entry name" value="Prion/Doppel_prot_b-ribbon_dom"/>
</dbReference>
<dbReference type="InterPro" id="IPR020949">
    <property type="entry name" value="Prion_copper_b_octapeptide"/>
</dbReference>
<dbReference type="InterPro" id="IPR025860">
    <property type="entry name" value="Prion_N"/>
</dbReference>
<dbReference type="PANTHER" id="PTHR15506">
    <property type="entry name" value="DOPPEL PRION"/>
    <property type="match status" value="1"/>
</dbReference>
<dbReference type="PANTHER" id="PTHR15506:SF2">
    <property type="entry name" value="MAJOR PRION PROTEIN"/>
    <property type="match status" value="1"/>
</dbReference>
<dbReference type="Pfam" id="PF00377">
    <property type="entry name" value="Prion"/>
    <property type="match status" value="1"/>
</dbReference>
<dbReference type="Pfam" id="PF11587">
    <property type="entry name" value="Prion_bPrPp"/>
    <property type="match status" value="1"/>
</dbReference>
<dbReference type="Pfam" id="PF03991">
    <property type="entry name" value="Prion_octapep"/>
    <property type="match status" value="1"/>
</dbReference>
<dbReference type="PRINTS" id="PR00341">
    <property type="entry name" value="PRION"/>
</dbReference>
<dbReference type="SMART" id="SM00157">
    <property type="entry name" value="PRP"/>
    <property type="match status" value="1"/>
</dbReference>
<dbReference type="SUPFAM" id="SSF54098">
    <property type="entry name" value="Prion-like"/>
    <property type="match status" value="1"/>
</dbReference>
<dbReference type="PROSITE" id="PS00291">
    <property type="entry name" value="PRION_1"/>
    <property type="match status" value="1"/>
</dbReference>
<dbReference type="PROSITE" id="PS00706">
    <property type="entry name" value="PRION_2"/>
    <property type="match status" value="1"/>
</dbReference>
<feature type="signal peptide" evidence="1">
    <location>
        <begin position="1"/>
        <end position="22"/>
    </location>
</feature>
<feature type="chain" id="PRO_0000025719" description="Major prion protein">
    <location>
        <begin position="23"/>
        <end position="230"/>
    </location>
</feature>
<feature type="propeptide" id="PRO_0000025720" description="Removed in mature form" evidence="1">
    <location>
        <begin position="231"/>
        <end position="253"/>
    </location>
</feature>
<feature type="repeat" description="1">
    <location>
        <begin position="51"/>
        <end position="59"/>
    </location>
</feature>
<feature type="repeat" description="2">
    <location>
        <begin position="60"/>
        <end position="67"/>
    </location>
</feature>
<feature type="repeat" description="3">
    <location>
        <begin position="68"/>
        <end position="75"/>
    </location>
</feature>
<feature type="repeat" description="4">
    <location>
        <begin position="76"/>
        <end position="83"/>
    </location>
</feature>
<feature type="repeat" description="5">
    <location>
        <begin position="84"/>
        <end position="91"/>
    </location>
</feature>
<feature type="region of interest" description="Interaction with GRB2, ERI3 and SYN1" evidence="4">
    <location>
        <begin position="23"/>
        <end position="230"/>
    </location>
</feature>
<feature type="region of interest" description="Disordered" evidence="6">
    <location>
        <begin position="26"/>
        <end position="108"/>
    </location>
</feature>
<feature type="region of interest" description="5 X 8 AA tandem repeats of P-H-G-G-G-W-G-Q">
    <location>
        <begin position="51"/>
        <end position="91"/>
    </location>
</feature>
<feature type="compositionally biased region" description="Gly residues" evidence="6">
    <location>
        <begin position="52"/>
        <end position="95"/>
    </location>
</feature>
<feature type="binding site" evidence="2">
    <location>
        <position position="61"/>
    </location>
    <ligand>
        <name>Cu(2+)</name>
        <dbReference type="ChEBI" id="CHEBI:29036"/>
        <label>1</label>
    </ligand>
</feature>
<feature type="binding site" evidence="2">
    <location>
        <position position="62"/>
    </location>
    <ligand>
        <name>Cu(2+)</name>
        <dbReference type="ChEBI" id="CHEBI:29036"/>
        <label>1</label>
    </ligand>
</feature>
<feature type="binding site" evidence="2">
    <location>
        <position position="63"/>
    </location>
    <ligand>
        <name>Cu(2+)</name>
        <dbReference type="ChEBI" id="CHEBI:29036"/>
        <label>1</label>
    </ligand>
</feature>
<feature type="binding site" evidence="2">
    <location>
        <position position="69"/>
    </location>
    <ligand>
        <name>Cu(2+)</name>
        <dbReference type="ChEBI" id="CHEBI:29036"/>
        <label>2</label>
    </ligand>
</feature>
<feature type="binding site" evidence="2">
    <location>
        <position position="70"/>
    </location>
    <ligand>
        <name>Cu(2+)</name>
        <dbReference type="ChEBI" id="CHEBI:29036"/>
        <label>2</label>
    </ligand>
</feature>
<feature type="binding site" evidence="2">
    <location>
        <position position="71"/>
    </location>
    <ligand>
        <name>Cu(2+)</name>
        <dbReference type="ChEBI" id="CHEBI:29036"/>
        <label>2</label>
    </ligand>
</feature>
<feature type="binding site" evidence="2">
    <location>
        <position position="77"/>
    </location>
    <ligand>
        <name>Cu(2+)</name>
        <dbReference type="ChEBI" id="CHEBI:29036"/>
        <label>3</label>
    </ligand>
</feature>
<feature type="binding site" evidence="2">
    <location>
        <position position="78"/>
    </location>
    <ligand>
        <name>Cu(2+)</name>
        <dbReference type="ChEBI" id="CHEBI:29036"/>
        <label>3</label>
    </ligand>
</feature>
<feature type="binding site" evidence="2">
    <location>
        <position position="79"/>
    </location>
    <ligand>
        <name>Cu(2+)</name>
        <dbReference type="ChEBI" id="CHEBI:29036"/>
        <label>3</label>
    </ligand>
</feature>
<feature type="binding site" evidence="2">
    <location>
        <position position="85"/>
    </location>
    <ligand>
        <name>Cu(2+)</name>
        <dbReference type="ChEBI" id="CHEBI:29036"/>
        <label>4</label>
    </ligand>
</feature>
<feature type="binding site" evidence="2">
    <location>
        <position position="86"/>
    </location>
    <ligand>
        <name>Cu(2+)</name>
        <dbReference type="ChEBI" id="CHEBI:29036"/>
        <label>4</label>
    </ligand>
</feature>
<feature type="binding site" evidence="2">
    <location>
        <position position="87"/>
    </location>
    <ligand>
        <name>Cu(2+)</name>
        <dbReference type="ChEBI" id="CHEBI:29036"/>
        <label>4</label>
    </ligand>
</feature>
<feature type="lipid moiety-binding region" description="GPI-anchor amidated serine" evidence="3">
    <location>
        <position position="230"/>
    </location>
</feature>
<feature type="glycosylation site" description="N-linked (GlcNAc...) asparagine" evidence="5">
    <location>
        <position position="181"/>
    </location>
</feature>
<feature type="glycosylation site" description="N-linked (GlcNAc...) asparagine" evidence="5">
    <location>
        <position position="197"/>
    </location>
</feature>
<feature type="disulfide bond" evidence="3">
    <location>
        <begin position="179"/>
        <end position="214"/>
    </location>
</feature>
<name>PRIO_TRAFR</name>
<proteinExistence type="inferred from homology"/>
<evidence type="ECO:0000250" key="1"/>
<evidence type="ECO:0000250" key="2">
    <source>
        <dbReference type="UniProtKB" id="P04156"/>
    </source>
</evidence>
<evidence type="ECO:0000250" key="3">
    <source>
        <dbReference type="UniProtKB" id="P04273"/>
    </source>
</evidence>
<evidence type="ECO:0000250" key="4">
    <source>
        <dbReference type="UniProtKB" id="P04925"/>
    </source>
</evidence>
<evidence type="ECO:0000255" key="5"/>
<evidence type="ECO:0000256" key="6">
    <source>
        <dbReference type="SAM" id="MobiDB-lite"/>
    </source>
</evidence>
<evidence type="ECO:0000305" key="7"/>
<accession>P40257</accession>
<comment type="function">
    <text evidence="2 4">Its primary physiological function is unclear. Has cytoprotective activity against internal or environmental stresses. May play a role in neuronal development and synaptic plasticity. May be required for neuronal myelin sheath maintenance. May play a role in iron uptake and iron homeostasis. Soluble oligomers are toxic to cultured neuroblastoma cells and induce apoptosis (in vitro). Association with GPC1 (via its heparan sulfate chains) targets PRNP to lipid rafts. Also provides Cu(2+) or Zn(2+) for the ascorbate-mediated GPC1 deaminase degradation of its heparan sulfate side chains (By similarity).</text>
</comment>
<comment type="subunit">
    <text evidence="2 4">Monomer and homodimer. Has a tendency to aggregate into amyloid fibrils containing a cross-beta spine, formed by a steric zipper of superposed beta-strands. Soluble oligomers may represent an intermediate stage on the path to fibril formation. Copper binding may promote oligomerization. Interacts with GRB2, APP, ERI3/PRNPIP and SYN1. Mislocalized cytosolically exposed PrP interacts with MGRN1; this interaction alters MGRN1 subcellular location and causes lysosomal enlargement. Interacts with KIAA1191.</text>
</comment>
<comment type="subcellular location">
    <subcellularLocation>
        <location evidence="2">Cell membrane</location>
        <topology evidence="2">Lipid-anchor</topology>
        <topology evidence="2">GPI-anchor</topology>
    </subcellularLocation>
    <subcellularLocation>
        <location evidence="4">Golgi apparatus</location>
    </subcellularLocation>
    <text evidence="2">Targeted to lipid rafts via association with the heparan sulfate chains of GPC1. Colocates, in the presence of Cu(2+), to vesicles in para- and perinuclear regions, where both proteins undergo internalization. Heparin displaces PRNP from lipid rafts and promotes endocytosis.</text>
</comment>
<comment type="domain">
    <text evidence="2">The normal, monomeric form has a mainly alpha-helical structure. The disease-associated, protease-resistant form forms amyloid fibrils containing a cross-beta spine, formed by a steric zipper of superposed beta-strands. Disease mutations may favor intermolecular contacts via short beta strands, and may thereby trigger oligomerization.</text>
</comment>
<comment type="domain">
    <text evidence="2">Contains an N-terminal region composed of octamer repeats. At low copper concentrations, the sidechains of His residues from three or four repeats contribute to the binding of a single copper ion. Alternatively, a copper ion can be bound by interaction with the sidechain and backbone amide nitrogen of a single His residue. The observed copper binding stoichiometry suggests that two repeat regions cooperate to stabilize the binding of a single copper ion. At higher copper concentrations, each octamer can bind one copper ion by interactions with the His sidechain and Gly backbone atoms. A mixture of binding types may occur, especially in the case of octamer repeat expansion. Copper binding may stabilize the conformation of this region and may promote oligomerization.</text>
</comment>
<comment type="disease">
    <text evidence="7">PrP is found in high quantity in the brain of humans and animals infected with the degenerative neurological diseases kuru, Creutzfeldt-Jakob disease (CJD), Gerstmann-Straussler syndrome (GSS), scrapie, bovine spongiform encephalopathy (BSE), transmissible mink encephalopathy (TME), etc.</text>
</comment>
<comment type="similarity">
    <text evidence="7">Belongs to the prion family.</text>
</comment>